<accession>P68628</accession>
<accession>P20528</accession>
<dbReference type="EMBL" id="M35027">
    <property type="protein sequence ID" value="AAA48184.1"/>
    <property type="molecule type" value="Genomic_DNA"/>
</dbReference>
<dbReference type="PIR" id="F42525">
    <property type="entry name" value="F42525"/>
</dbReference>
<dbReference type="Proteomes" id="UP000008269">
    <property type="component" value="Segment"/>
</dbReference>
<gene>
    <name type="ORF">A ORF S</name>
</gene>
<sequence length="67" mass="7503">MSVISNPSKYKQSNTNKHMLEFLYSFFLCIPKLPNGSGTLCSSTRTISESNTIDVAFLNAFGMYSLR</sequence>
<proteinExistence type="predicted"/>
<protein>
    <recommendedName>
        <fullName>Uncharacterized 7.5 kDa protein</fullName>
    </recommendedName>
</protein>
<reference key="1">
    <citation type="journal article" date="1990" name="Virology">
        <title>The complete DNA sequence of vaccinia virus.</title>
        <authorList>
            <person name="Goebel S.J."/>
            <person name="Johnson G.P."/>
            <person name="Perkus M.E."/>
            <person name="Davis S.W."/>
            <person name="Winslow J.P."/>
            <person name="Paoletti E."/>
        </authorList>
    </citation>
    <scope>NUCLEOTIDE SEQUENCE [LARGE SCALE GENOMIC DNA]</scope>
</reference>
<reference key="2">
    <citation type="journal article" date="1990" name="Virology">
        <title>Appendix to 'The complete DNA sequence of vaccinia virus'.</title>
        <authorList>
            <person name="Goebel S.J."/>
            <person name="Johnson G.P."/>
            <person name="Perkus M.E."/>
            <person name="Davis S.W."/>
            <person name="Winslow J.P."/>
            <person name="Paoletti E."/>
        </authorList>
    </citation>
    <scope>COMPLETE GENOME</scope>
</reference>
<name>YVAS_VACCC</name>
<keyword id="KW-1185">Reference proteome</keyword>
<feature type="chain" id="PRO_0000099662" description="Uncharacterized 7.5 kDa protein">
    <location>
        <begin position="1"/>
        <end position="67"/>
    </location>
</feature>
<organism>
    <name type="scientific">Vaccinia virus (strain Copenhagen)</name>
    <name type="common">VACV</name>
    <dbReference type="NCBI Taxonomy" id="10249"/>
    <lineage>
        <taxon>Viruses</taxon>
        <taxon>Varidnaviria</taxon>
        <taxon>Bamfordvirae</taxon>
        <taxon>Nucleocytoviricota</taxon>
        <taxon>Pokkesviricetes</taxon>
        <taxon>Chitovirales</taxon>
        <taxon>Poxviridae</taxon>
        <taxon>Chordopoxvirinae</taxon>
        <taxon>Orthopoxvirus</taxon>
        <taxon>Vaccinia virus</taxon>
    </lineage>
</organism>
<organismHost>
    <name type="scientific">Homo sapiens</name>
    <name type="common">Human</name>
    <dbReference type="NCBI Taxonomy" id="9606"/>
</organismHost>